<sequence length="311" mass="35748">MICKNTFVDYPTTQVRKERVHTYRTLTSATPSLEFFSNENTNRLSEVQCKLTHFLSSSENSSSVRNTRTHKFKQLLHYIFFSNRSSSVLGKQNVHNSQTLGSVSFCEKHAIDINYSENVNKQLNFESHLDDQTCSKRFYFNEQSGSDRYSLKCDSDTDSSTYFGDSASETCSSASNSLYKQTDLTSLCMFNQNKIQTDWSSIDPMDNDKIVCADFEKNFNILKELLNNTKDNGIDQQIVHKEHISHLEKIWKNINEESSEDPSLLLLRLEFLLTDLQTAIRKYSDTVSTNSVNEAFFDKIKIELQAFGVLV</sequence>
<dbReference type="EMBL" id="CU329672">
    <property type="protein sequence ID" value="CAA21116.1"/>
    <property type="molecule type" value="Genomic_DNA"/>
</dbReference>
<dbReference type="PIR" id="T40886">
    <property type="entry name" value="T40886"/>
</dbReference>
<dbReference type="RefSeq" id="NP_587738.1">
    <property type="nucleotide sequence ID" value="NM_001022733.2"/>
</dbReference>
<dbReference type="SMR" id="O74848"/>
<dbReference type="BioGRID" id="275723">
    <property type="interactions" value="5"/>
</dbReference>
<dbReference type="STRING" id="284812.O74848"/>
<dbReference type="PaxDb" id="4896-SPCC1235.12c.1"/>
<dbReference type="EnsemblFungi" id="SPCC1235.12c.1">
    <property type="protein sequence ID" value="SPCC1235.12c.1:pep"/>
    <property type="gene ID" value="SPCC1235.12c"/>
</dbReference>
<dbReference type="GeneID" id="2539151"/>
<dbReference type="KEGG" id="spo:2539151"/>
<dbReference type="PomBase" id="SPCC1235.12c">
    <property type="gene designation" value="mug146"/>
</dbReference>
<dbReference type="VEuPathDB" id="FungiDB:SPCC1235.12c"/>
<dbReference type="HOGENOM" id="CLU_897596_0_0_1"/>
<dbReference type="InParanoid" id="O74848"/>
<dbReference type="PRO" id="PR:O74848"/>
<dbReference type="Proteomes" id="UP000002485">
    <property type="component" value="Chromosome III"/>
</dbReference>
<dbReference type="GO" id="GO:0005737">
    <property type="term" value="C:cytoplasm"/>
    <property type="evidence" value="ECO:0007005"/>
    <property type="project" value="PomBase"/>
</dbReference>
<dbReference type="GO" id="GO:0005829">
    <property type="term" value="C:cytosol"/>
    <property type="evidence" value="ECO:0007005"/>
    <property type="project" value="PomBase"/>
</dbReference>
<dbReference type="GO" id="GO:0005634">
    <property type="term" value="C:nucleus"/>
    <property type="evidence" value="ECO:0007005"/>
    <property type="project" value="PomBase"/>
</dbReference>
<dbReference type="GO" id="GO:0030435">
    <property type="term" value="P:sporulation resulting in formation of a cellular spore"/>
    <property type="evidence" value="ECO:0007669"/>
    <property type="project" value="UniProtKB-KW"/>
</dbReference>
<comment type="function">
    <text evidence="1">Has a role in sporulation.</text>
</comment>
<comment type="subcellular location">
    <subcellularLocation>
        <location evidence="2">Cytoplasm</location>
    </subcellularLocation>
    <subcellularLocation>
        <location evidence="2">Nucleus</location>
    </subcellularLocation>
</comment>
<organism>
    <name type="scientific">Schizosaccharomyces pombe (strain 972 / ATCC 24843)</name>
    <name type="common">Fission yeast</name>
    <dbReference type="NCBI Taxonomy" id="284812"/>
    <lineage>
        <taxon>Eukaryota</taxon>
        <taxon>Fungi</taxon>
        <taxon>Dikarya</taxon>
        <taxon>Ascomycota</taxon>
        <taxon>Taphrinomycotina</taxon>
        <taxon>Schizosaccharomycetes</taxon>
        <taxon>Schizosaccharomycetales</taxon>
        <taxon>Schizosaccharomycetaceae</taxon>
        <taxon>Schizosaccharomyces</taxon>
    </lineage>
</organism>
<accession>O74848</accession>
<name>MU146_SCHPO</name>
<protein>
    <recommendedName>
        <fullName>Meiotically up-regulated gene 146 protein</fullName>
    </recommendedName>
</protein>
<keyword id="KW-0963">Cytoplasm</keyword>
<keyword id="KW-0539">Nucleus</keyword>
<keyword id="KW-1185">Reference proteome</keyword>
<keyword id="KW-0749">Sporulation</keyword>
<evidence type="ECO:0000269" key="1">
    <source>
    </source>
</evidence>
<evidence type="ECO:0000269" key="2">
    <source>
    </source>
</evidence>
<proteinExistence type="evidence at protein level"/>
<reference key="1">
    <citation type="journal article" date="2002" name="Nature">
        <title>The genome sequence of Schizosaccharomyces pombe.</title>
        <authorList>
            <person name="Wood V."/>
            <person name="Gwilliam R."/>
            <person name="Rajandream M.A."/>
            <person name="Lyne M.H."/>
            <person name="Lyne R."/>
            <person name="Stewart A."/>
            <person name="Sgouros J.G."/>
            <person name="Peat N."/>
            <person name="Hayles J."/>
            <person name="Baker S.G."/>
            <person name="Basham D."/>
            <person name="Bowman S."/>
            <person name="Brooks K."/>
            <person name="Brown D."/>
            <person name="Brown S."/>
            <person name="Chillingworth T."/>
            <person name="Churcher C.M."/>
            <person name="Collins M."/>
            <person name="Connor R."/>
            <person name="Cronin A."/>
            <person name="Davis P."/>
            <person name="Feltwell T."/>
            <person name="Fraser A."/>
            <person name="Gentles S."/>
            <person name="Goble A."/>
            <person name="Hamlin N."/>
            <person name="Harris D.E."/>
            <person name="Hidalgo J."/>
            <person name="Hodgson G."/>
            <person name="Holroyd S."/>
            <person name="Hornsby T."/>
            <person name="Howarth S."/>
            <person name="Huckle E.J."/>
            <person name="Hunt S."/>
            <person name="Jagels K."/>
            <person name="James K.D."/>
            <person name="Jones L."/>
            <person name="Jones M."/>
            <person name="Leather S."/>
            <person name="McDonald S."/>
            <person name="McLean J."/>
            <person name="Mooney P."/>
            <person name="Moule S."/>
            <person name="Mungall K.L."/>
            <person name="Murphy L.D."/>
            <person name="Niblett D."/>
            <person name="Odell C."/>
            <person name="Oliver K."/>
            <person name="O'Neil S."/>
            <person name="Pearson D."/>
            <person name="Quail M.A."/>
            <person name="Rabbinowitsch E."/>
            <person name="Rutherford K.M."/>
            <person name="Rutter S."/>
            <person name="Saunders D."/>
            <person name="Seeger K."/>
            <person name="Sharp S."/>
            <person name="Skelton J."/>
            <person name="Simmonds M.N."/>
            <person name="Squares R."/>
            <person name="Squares S."/>
            <person name="Stevens K."/>
            <person name="Taylor K."/>
            <person name="Taylor R.G."/>
            <person name="Tivey A."/>
            <person name="Walsh S.V."/>
            <person name="Warren T."/>
            <person name="Whitehead S."/>
            <person name="Woodward J.R."/>
            <person name="Volckaert G."/>
            <person name="Aert R."/>
            <person name="Robben J."/>
            <person name="Grymonprez B."/>
            <person name="Weltjens I."/>
            <person name="Vanstreels E."/>
            <person name="Rieger M."/>
            <person name="Schaefer M."/>
            <person name="Mueller-Auer S."/>
            <person name="Gabel C."/>
            <person name="Fuchs M."/>
            <person name="Duesterhoeft A."/>
            <person name="Fritzc C."/>
            <person name="Holzer E."/>
            <person name="Moestl D."/>
            <person name="Hilbert H."/>
            <person name="Borzym K."/>
            <person name="Langer I."/>
            <person name="Beck A."/>
            <person name="Lehrach H."/>
            <person name="Reinhardt R."/>
            <person name="Pohl T.M."/>
            <person name="Eger P."/>
            <person name="Zimmermann W."/>
            <person name="Wedler H."/>
            <person name="Wambutt R."/>
            <person name="Purnelle B."/>
            <person name="Goffeau A."/>
            <person name="Cadieu E."/>
            <person name="Dreano S."/>
            <person name="Gloux S."/>
            <person name="Lelaure V."/>
            <person name="Mottier S."/>
            <person name="Galibert F."/>
            <person name="Aves S.J."/>
            <person name="Xiang Z."/>
            <person name="Hunt C."/>
            <person name="Moore K."/>
            <person name="Hurst S.M."/>
            <person name="Lucas M."/>
            <person name="Rochet M."/>
            <person name="Gaillardin C."/>
            <person name="Tallada V.A."/>
            <person name="Garzon A."/>
            <person name="Thode G."/>
            <person name="Daga R.R."/>
            <person name="Cruzado L."/>
            <person name="Jimenez J."/>
            <person name="Sanchez M."/>
            <person name="del Rey F."/>
            <person name="Benito J."/>
            <person name="Dominguez A."/>
            <person name="Revuelta J.L."/>
            <person name="Moreno S."/>
            <person name="Armstrong J."/>
            <person name="Forsburg S.L."/>
            <person name="Cerutti L."/>
            <person name="Lowe T."/>
            <person name="McCombie W.R."/>
            <person name="Paulsen I."/>
            <person name="Potashkin J."/>
            <person name="Shpakovski G.V."/>
            <person name="Ussery D."/>
            <person name="Barrell B.G."/>
            <person name="Nurse P."/>
        </authorList>
    </citation>
    <scope>NUCLEOTIDE SEQUENCE [LARGE SCALE GENOMIC DNA]</scope>
    <source>
        <strain>972 / ATCC 24843</strain>
    </source>
</reference>
<reference key="2">
    <citation type="journal article" date="2005" name="Curr. Biol.">
        <title>A large-scale screen in S. pombe identifies seven novel genes required for critical meiotic events.</title>
        <authorList>
            <person name="Martin-Castellanos C."/>
            <person name="Blanco M."/>
            <person name="Rozalen A.E."/>
            <person name="Perez-Hidalgo L."/>
            <person name="Garcia A.I."/>
            <person name="Conde F."/>
            <person name="Mata J."/>
            <person name="Ellermeier C."/>
            <person name="Davis L."/>
            <person name="San-Segundo P."/>
            <person name="Smith G.R."/>
            <person name="Moreno S."/>
        </authorList>
    </citation>
    <scope>FUNCTION IN SPORULATION</scope>
</reference>
<reference key="3">
    <citation type="journal article" date="2006" name="Nat. Biotechnol.">
        <title>ORFeome cloning and global analysis of protein localization in the fission yeast Schizosaccharomyces pombe.</title>
        <authorList>
            <person name="Matsuyama A."/>
            <person name="Arai R."/>
            <person name="Yashiroda Y."/>
            <person name="Shirai A."/>
            <person name="Kamata A."/>
            <person name="Sekido S."/>
            <person name="Kobayashi Y."/>
            <person name="Hashimoto A."/>
            <person name="Hamamoto M."/>
            <person name="Hiraoka Y."/>
            <person name="Horinouchi S."/>
            <person name="Yoshida M."/>
        </authorList>
    </citation>
    <scope>SUBCELLULAR LOCATION [LARGE SCALE ANALYSIS]</scope>
</reference>
<feature type="chain" id="PRO_0000278629" description="Meiotically up-regulated gene 146 protein">
    <location>
        <begin position="1"/>
        <end position="311"/>
    </location>
</feature>
<gene>
    <name type="primary">mug146</name>
    <name type="ORF">SPCC1235.12c</name>
</gene>